<protein>
    <recommendedName>
        <fullName evidence="1">Indole-3-glycerol phosphate synthase</fullName>
        <shortName evidence="1">IGPS</shortName>
        <ecNumber evidence="1">4.1.1.48</ecNumber>
    </recommendedName>
</protein>
<organism>
    <name type="scientific">Staphylococcus aureus (strain Mu50 / ATCC 700699)</name>
    <dbReference type="NCBI Taxonomy" id="158878"/>
    <lineage>
        <taxon>Bacteria</taxon>
        <taxon>Bacillati</taxon>
        <taxon>Bacillota</taxon>
        <taxon>Bacilli</taxon>
        <taxon>Bacillales</taxon>
        <taxon>Staphylococcaceae</taxon>
        <taxon>Staphylococcus</taxon>
    </lineage>
</organism>
<feature type="chain" id="PRO_0000154250" description="Indole-3-glycerol phosphate synthase">
    <location>
        <begin position="1"/>
        <end position="260"/>
    </location>
</feature>
<accession>P66990</accession>
<accession>Q99UB1</accession>
<gene>
    <name evidence="1" type="primary">trpC</name>
    <name type="ordered locus">SAV1370</name>
</gene>
<comment type="catalytic activity">
    <reaction evidence="1">
        <text>1-(2-carboxyphenylamino)-1-deoxy-D-ribulose 5-phosphate + H(+) = (1S,2R)-1-C-(indol-3-yl)glycerol 3-phosphate + CO2 + H2O</text>
        <dbReference type="Rhea" id="RHEA:23476"/>
        <dbReference type="ChEBI" id="CHEBI:15377"/>
        <dbReference type="ChEBI" id="CHEBI:15378"/>
        <dbReference type="ChEBI" id="CHEBI:16526"/>
        <dbReference type="ChEBI" id="CHEBI:58613"/>
        <dbReference type="ChEBI" id="CHEBI:58866"/>
        <dbReference type="EC" id="4.1.1.48"/>
    </reaction>
</comment>
<comment type="pathway">
    <text evidence="1">Amino-acid biosynthesis; L-tryptophan biosynthesis; L-tryptophan from chorismate: step 4/5.</text>
</comment>
<comment type="similarity">
    <text evidence="1">Belongs to the TrpC family.</text>
</comment>
<name>TRPC_STAAM</name>
<evidence type="ECO:0000255" key="1">
    <source>
        <dbReference type="HAMAP-Rule" id="MF_00134"/>
    </source>
</evidence>
<proteinExistence type="inferred from homology"/>
<dbReference type="EC" id="4.1.1.48" evidence="1"/>
<dbReference type="EMBL" id="BA000017">
    <property type="protein sequence ID" value="BAB57532.1"/>
    <property type="molecule type" value="Genomic_DNA"/>
</dbReference>
<dbReference type="RefSeq" id="WP_000153613.1">
    <property type="nucleotide sequence ID" value="NC_002758.2"/>
</dbReference>
<dbReference type="SMR" id="P66990"/>
<dbReference type="KEGG" id="sav:SAV1370"/>
<dbReference type="HOGENOM" id="CLU_034247_2_1_9"/>
<dbReference type="PhylomeDB" id="P66990"/>
<dbReference type="UniPathway" id="UPA00035">
    <property type="reaction ID" value="UER00043"/>
</dbReference>
<dbReference type="Proteomes" id="UP000002481">
    <property type="component" value="Chromosome"/>
</dbReference>
<dbReference type="GO" id="GO:0004425">
    <property type="term" value="F:indole-3-glycerol-phosphate synthase activity"/>
    <property type="evidence" value="ECO:0007669"/>
    <property type="project" value="UniProtKB-UniRule"/>
</dbReference>
<dbReference type="GO" id="GO:0004640">
    <property type="term" value="F:phosphoribosylanthranilate isomerase activity"/>
    <property type="evidence" value="ECO:0007669"/>
    <property type="project" value="TreeGrafter"/>
</dbReference>
<dbReference type="GO" id="GO:0000162">
    <property type="term" value="P:L-tryptophan biosynthetic process"/>
    <property type="evidence" value="ECO:0007669"/>
    <property type="project" value="UniProtKB-UniRule"/>
</dbReference>
<dbReference type="CDD" id="cd00331">
    <property type="entry name" value="IGPS"/>
    <property type="match status" value="1"/>
</dbReference>
<dbReference type="FunFam" id="3.20.20.70:FF:000212">
    <property type="entry name" value="Indole-3-glycerol phosphate synthase"/>
    <property type="match status" value="1"/>
</dbReference>
<dbReference type="Gene3D" id="3.20.20.70">
    <property type="entry name" value="Aldolase class I"/>
    <property type="match status" value="1"/>
</dbReference>
<dbReference type="HAMAP" id="MF_00134_B">
    <property type="entry name" value="IGPS_B"/>
    <property type="match status" value="1"/>
</dbReference>
<dbReference type="InterPro" id="IPR013785">
    <property type="entry name" value="Aldolase_TIM"/>
</dbReference>
<dbReference type="InterPro" id="IPR045186">
    <property type="entry name" value="Indole-3-glycerol_P_synth"/>
</dbReference>
<dbReference type="InterPro" id="IPR013798">
    <property type="entry name" value="Indole-3-glycerol_P_synth_dom"/>
</dbReference>
<dbReference type="InterPro" id="IPR001468">
    <property type="entry name" value="Indole-3-GlycerolPSynthase_CS"/>
</dbReference>
<dbReference type="InterPro" id="IPR011060">
    <property type="entry name" value="RibuloseP-bd_barrel"/>
</dbReference>
<dbReference type="NCBIfam" id="NF001371">
    <property type="entry name" value="PRK00278.1-3"/>
    <property type="match status" value="1"/>
</dbReference>
<dbReference type="PANTHER" id="PTHR22854:SF2">
    <property type="entry name" value="INDOLE-3-GLYCEROL-PHOSPHATE SYNTHASE"/>
    <property type="match status" value="1"/>
</dbReference>
<dbReference type="PANTHER" id="PTHR22854">
    <property type="entry name" value="TRYPTOPHAN BIOSYNTHESIS PROTEIN"/>
    <property type="match status" value="1"/>
</dbReference>
<dbReference type="Pfam" id="PF00218">
    <property type="entry name" value="IGPS"/>
    <property type="match status" value="1"/>
</dbReference>
<dbReference type="SUPFAM" id="SSF51366">
    <property type="entry name" value="Ribulose-phoshate binding barrel"/>
    <property type="match status" value="1"/>
</dbReference>
<dbReference type="PROSITE" id="PS00614">
    <property type="entry name" value="IGPS"/>
    <property type="match status" value="1"/>
</dbReference>
<sequence length="260" mass="29509">MTILAEIVKYKQSLLQNGYYQDKLNTLKSVKIQNKKSFINAIEKEPKLAIIAEIKSKSPTVNDLPERDLSQQISDYEKYGANAVSILTDEKYFGGSFERLQALTTKTTLPVLCKDFIIDPLQIDVAKQAGASMILLIVNILSDKQLKDLYNYAISQNLEVLIEVHDRHELERAYKVNAKLIGVNNRDLKRFVTNVEHTNTILENKKPNHHYISESGIHDASDVRKILHSGIDGLLIGEALMRCDNLSEFLPQLKMQKVKS</sequence>
<keyword id="KW-0028">Amino-acid biosynthesis</keyword>
<keyword id="KW-0057">Aromatic amino acid biosynthesis</keyword>
<keyword id="KW-0210">Decarboxylase</keyword>
<keyword id="KW-0456">Lyase</keyword>
<keyword id="KW-0822">Tryptophan biosynthesis</keyword>
<reference key="1">
    <citation type="journal article" date="2001" name="Lancet">
        <title>Whole genome sequencing of meticillin-resistant Staphylococcus aureus.</title>
        <authorList>
            <person name="Kuroda M."/>
            <person name="Ohta T."/>
            <person name="Uchiyama I."/>
            <person name="Baba T."/>
            <person name="Yuzawa H."/>
            <person name="Kobayashi I."/>
            <person name="Cui L."/>
            <person name="Oguchi A."/>
            <person name="Aoki K."/>
            <person name="Nagai Y."/>
            <person name="Lian J.-Q."/>
            <person name="Ito T."/>
            <person name="Kanamori M."/>
            <person name="Matsumaru H."/>
            <person name="Maruyama A."/>
            <person name="Murakami H."/>
            <person name="Hosoyama A."/>
            <person name="Mizutani-Ui Y."/>
            <person name="Takahashi N.K."/>
            <person name="Sawano T."/>
            <person name="Inoue R."/>
            <person name="Kaito C."/>
            <person name="Sekimizu K."/>
            <person name="Hirakawa H."/>
            <person name="Kuhara S."/>
            <person name="Goto S."/>
            <person name="Yabuzaki J."/>
            <person name="Kanehisa M."/>
            <person name="Yamashita A."/>
            <person name="Oshima K."/>
            <person name="Furuya K."/>
            <person name="Yoshino C."/>
            <person name="Shiba T."/>
            <person name="Hattori M."/>
            <person name="Ogasawara N."/>
            <person name="Hayashi H."/>
            <person name="Hiramatsu K."/>
        </authorList>
    </citation>
    <scope>NUCLEOTIDE SEQUENCE [LARGE SCALE GENOMIC DNA]</scope>
    <source>
        <strain>Mu50 / ATCC 700699</strain>
    </source>
</reference>